<comment type="function">
    <text evidence="1">This protein specifically catalyzes the removal of signal peptides from prolipoproteins.</text>
</comment>
<comment type="catalytic activity">
    <reaction evidence="1">
        <text>Release of signal peptides from bacterial membrane prolipoproteins. Hydrolyzes -Xaa-Yaa-Zaa-|-(S,diacylglyceryl)Cys-, in which Xaa is hydrophobic (preferably Leu), and Yaa (Ala or Ser) and Zaa (Gly or Ala) have small, neutral side chains.</text>
        <dbReference type="EC" id="3.4.23.36"/>
    </reaction>
</comment>
<comment type="pathway">
    <text evidence="1">Protein modification; lipoprotein biosynthesis (signal peptide cleavage).</text>
</comment>
<comment type="subcellular location">
    <subcellularLocation>
        <location evidence="1">Cell inner membrane</location>
        <topology evidence="1">Multi-pass membrane protein</topology>
    </subcellularLocation>
</comment>
<comment type="similarity">
    <text evidence="1">Belongs to the peptidase A8 family.</text>
</comment>
<accession>Q57FM7</accession>
<reference key="1">
    <citation type="journal article" date="2005" name="J. Bacteriol.">
        <title>Completion of the genome sequence of Brucella abortus and comparison to the highly similar genomes of Brucella melitensis and Brucella suis.</title>
        <authorList>
            <person name="Halling S.M."/>
            <person name="Peterson-Burch B.D."/>
            <person name="Bricker B.J."/>
            <person name="Zuerner R.L."/>
            <person name="Qing Z."/>
            <person name="Li L.-L."/>
            <person name="Kapur V."/>
            <person name="Alt D.P."/>
            <person name="Olsen S.C."/>
        </authorList>
    </citation>
    <scope>NUCLEOTIDE SEQUENCE [LARGE SCALE GENOMIC DNA]</scope>
    <source>
        <strain>9-941</strain>
    </source>
</reference>
<sequence length="160" mass="18230">MKRHAVWSSLFVVILAVLIDQGIKYLVESRMFYGQQIDLLPFLALFRTHNEGIAFSMLAWLHDGGLIAITLAVIAFVLYLWWTNAPERVFARYGFALVIGGAIGNLIDRVMHGYVVDYVLFHLPTWSFAVFNLADAFITIGAGLIILEEFLGWRRERISH</sequence>
<dbReference type="EC" id="3.4.23.36" evidence="1"/>
<dbReference type="EMBL" id="AE017223">
    <property type="protein sequence ID" value="AAX73557.1"/>
    <property type="molecule type" value="Genomic_DNA"/>
</dbReference>
<dbReference type="RefSeq" id="WP_002965397.1">
    <property type="nucleotide sequence ID" value="NC_006932.1"/>
</dbReference>
<dbReference type="SMR" id="Q57FM7"/>
<dbReference type="EnsemblBacteria" id="AAX73557">
    <property type="protein sequence ID" value="AAX73557"/>
    <property type="gene ID" value="BruAb1_0145"/>
</dbReference>
<dbReference type="GeneID" id="97534439"/>
<dbReference type="KEGG" id="bmb:BruAb1_0145"/>
<dbReference type="HOGENOM" id="CLU_083252_4_3_5"/>
<dbReference type="UniPathway" id="UPA00665"/>
<dbReference type="Proteomes" id="UP000000540">
    <property type="component" value="Chromosome I"/>
</dbReference>
<dbReference type="GO" id="GO:0005886">
    <property type="term" value="C:plasma membrane"/>
    <property type="evidence" value="ECO:0007669"/>
    <property type="project" value="UniProtKB-SubCell"/>
</dbReference>
<dbReference type="GO" id="GO:0004190">
    <property type="term" value="F:aspartic-type endopeptidase activity"/>
    <property type="evidence" value="ECO:0007669"/>
    <property type="project" value="UniProtKB-UniRule"/>
</dbReference>
<dbReference type="GO" id="GO:0006508">
    <property type="term" value="P:proteolysis"/>
    <property type="evidence" value="ECO:0007669"/>
    <property type="project" value="UniProtKB-KW"/>
</dbReference>
<dbReference type="HAMAP" id="MF_00161">
    <property type="entry name" value="LspA"/>
    <property type="match status" value="1"/>
</dbReference>
<dbReference type="InterPro" id="IPR001872">
    <property type="entry name" value="Peptidase_A8"/>
</dbReference>
<dbReference type="NCBIfam" id="TIGR00077">
    <property type="entry name" value="lspA"/>
    <property type="match status" value="1"/>
</dbReference>
<dbReference type="PANTHER" id="PTHR33695">
    <property type="entry name" value="LIPOPROTEIN SIGNAL PEPTIDASE"/>
    <property type="match status" value="1"/>
</dbReference>
<dbReference type="PANTHER" id="PTHR33695:SF1">
    <property type="entry name" value="LIPOPROTEIN SIGNAL PEPTIDASE"/>
    <property type="match status" value="1"/>
</dbReference>
<dbReference type="Pfam" id="PF01252">
    <property type="entry name" value="Peptidase_A8"/>
    <property type="match status" value="1"/>
</dbReference>
<dbReference type="PRINTS" id="PR00781">
    <property type="entry name" value="LIPOSIGPTASE"/>
</dbReference>
<dbReference type="PROSITE" id="PS00855">
    <property type="entry name" value="SPASE_II"/>
    <property type="match status" value="1"/>
</dbReference>
<proteinExistence type="inferred from homology"/>
<gene>
    <name evidence="1" type="primary">lspA</name>
    <name type="ordered locus">BruAb1_0145</name>
</gene>
<name>LSPA_BRUAB</name>
<organism>
    <name type="scientific">Brucella abortus biovar 1 (strain 9-941)</name>
    <dbReference type="NCBI Taxonomy" id="262698"/>
    <lineage>
        <taxon>Bacteria</taxon>
        <taxon>Pseudomonadati</taxon>
        <taxon>Pseudomonadota</taxon>
        <taxon>Alphaproteobacteria</taxon>
        <taxon>Hyphomicrobiales</taxon>
        <taxon>Brucellaceae</taxon>
        <taxon>Brucella/Ochrobactrum group</taxon>
        <taxon>Brucella</taxon>
    </lineage>
</organism>
<keyword id="KW-0064">Aspartyl protease</keyword>
<keyword id="KW-0997">Cell inner membrane</keyword>
<keyword id="KW-1003">Cell membrane</keyword>
<keyword id="KW-0378">Hydrolase</keyword>
<keyword id="KW-0472">Membrane</keyword>
<keyword id="KW-0645">Protease</keyword>
<keyword id="KW-0812">Transmembrane</keyword>
<keyword id="KW-1133">Transmembrane helix</keyword>
<feature type="chain" id="PRO_0000289357" description="Lipoprotein signal peptidase">
    <location>
        <begin position="1"/>
        <end position="160"/>
    </location>
</feature>
<feature type="transmembrane region" description="Helical" evidence="1">
    <location>
        <begin position="6"/>
        <end position="26"/>
    </location>
</feature>
<feature type="transmembrane region" description="Helical" evidence="1">
    <location>
        <begin position="58"/>
        <end position="78"/>
    </location>
</feature>
<feature type="transmembrane region" description="Helical" evidence="1">
    <location>
        <begin position="95"/>
        <end position="115"/>
    </location>
</feature>
<feature type="transmembrane region" description="Helical" evidence="1">
    <location>
        <begin position="127"/>
        <end position="147"/>
    </location>
</feature>
<feature type="active site" evidence="1">
    <location>
        <position position="117"/>
    </location>
</feature>
<feature type="active site" evidence="1">
    <location>
        <position position="135"/>
    </location>
</feature>
<evidence type="ECO:0000255" key="1">
    <source>
        <dbReference type="HAMAP-Rule" id="MF_00161"/>
    </source>
</evidence>
<protein>
    <recommendedName>
        <fullName evidence="1">Lipoprotein signal peptidase</fullName>
        <ecNumber evidence="1">3.4.23.36</ecNumber>
    </recommendedName>
    <alternativeName>
        <fullName evidence="1">Prolipoprotein signal peptidase</fullName>
    </alternativeName>
    <alternativeName>
        <fullName evidence="1">Signal peptidase II</fullName>
        <shortName evidence="1">SPase II</shortName>
    </alternativeName>
</protein>